<dbReference type="EC" id="7.2.2.-"/>
<dbReference type="EMBL" id="AL123456">
    <property type="protein sequence ID" value="CCP44228.1"/>
    <property type="molecule type" value="Genomic_DNA"/>
</dbReference>
<dbReference type="PIR" id="H70872">
    <property type="entry name" value="H70872"/>
</dbReference>
<dbReference type="RefSeq" id="NP_215985.1">
    <property type="nucleotide sequence ID" value="NC_000962.3"/>
</dbReference>
<dbReference type="RefSeq" id="WP_003900344.1">
    <property type="nucleotide sequence ID" value="NZ_NVQJ01000004.1"/>
</dbReference>
<dbReference type="SMR" id="P9WPT3"/>
<dbReference type="FunCoup" id="P9WPT3">
    <property type="interactions" value="1"/>
</dbReference>
<dbReference type="STRING" id="83332.Rv1469"/>
<dbReference type="PaxDb" id="83332-Rv1469"/>
<dbReference type="DNASU" id="886578"/>
<dbReference type="GeneID" id="886578"/>
<dbReference type="KEGG" id="mtu:Rv1469"/>
<dbReference type="KEGG" id="mtv:RVBD_1469"/>
<dbReference type="TubercuList" id="Rv1469"/>
<dbReference type="eggNOG" id="COG2217">
    <property type="taxonomic scope" value="Bacteria"/>
</dbReference>
<dbReference type="InParanoid" id="P9WPT3"/>
<dbReference type="OrthoDB" id="7059309at2"/>
<dbReference type="PhylomeDB" id="P9WPT3"/>
<dbReference type="Proteomes" id="UP000001584">
    <property type="component" value="Chromosome"/>
</dbReference>
<dbReference type="GO" id="GO:0005886">
    <property type="term" value="C:plasma membrane"/>
    <property type="evidence" value="ECO:0007005"/>
    <property type="project" value="MTBBASE"/>
</dbReference>
<dbReference type="GO" id="GO:0005524">
    <property type="term" value="F:ATP binding"/>
    <property type="evidence" value="ECO:0007669"/>
    <property type="project" value="UniProtKB-KW"/>
</dbReference>
<dbReference type="GO" id="GO:0016887">
    <property type="term" value="F:ATP hydrolysis activity"/>
    <property type="evidence" value="ECO:0007669"/>
    <property type="project" value="InterPro"/>
</dbReference>
<dbReference type="GO" id="GO:0019829">
    <property type="term" value="F:ATPase-coupled monoatomic cation transmembrane transporter activity"/>
    <property type="evidence" value="ECO:0007669"/>
    <property type="project" value="InterPro"/>
</dbReference>
<dbReference type="GO" id="GO:0046872">
    <property type="term" value="F:metal ion binding"/>
    <property type="evidence" value="ECO:0007669"/>
    <property type="project" value="UniProtKB-KW"/>
</dbReference>
<dbReference type="CDD" id="cd07551">
    <property type="entry name" value="P-type_ATPase_HM_ZosA_PfeT-like"/>
    <property type="match status" value="1"/>
</dbReference>
<dbReference type="FunFam" id="2.70.150.10:FF:000002">
    <property type="entry name" value="Copper-transporting ATPase 1, putative"/>
    <property type="match status" value="1"/>
</dbReference>
<dbReference type="Gene3D" id="3.40.1110.10">
    <property type="entry name" value="Calcium-transporting ATPase, cytoplasmic domain N"/>
    <property type="match status" value="1"/>
</dbReference>
<dbReference type="Gene3D" id="2.70.150.10">
    <property type="entry name" value="Calcium-transporting ATPase, cytoplasmic transduction domain A"/>
    <property type="match status" value="1"/>
</dbReference>
<dbReference type="Gene3D" id="3.40.50.1000">
    <property type="entry name" value="HAD superfamily/HAD-like"/>
    <property type="match status" value="1"/>
</dbReference>
<dbReference type="InterPro" id="IPR023299">
    <property type="entry name" value="ATPase_P-typ_cyto_dom_N"/>
</dbReference>
<dbReference type="InterPro" id="IPR018303">
    <property type="entry name" value="ATPase_P-typ_P_site"/>
</dbReference>
<dbReference type="InterPro" id="IPR023298">
    <property type="entry name" value="ATPase_P-typ_TM_dom_sf"/>
</dbReference>
<dbReference type="InterPro" id="IPR008250">
    <property type="entry name" value="ATPase_P-typ_transduc_dom_A_sf"/>
</dbReference>
<dbReference type="InterPro" id="IPR051949">
    <property type="entry name" value="Cation_Transport_ATPase"/>
</dbReference>
<dbReference type="InterPro" id="IPR036412">
    <property type="entry name" value="HAD-like_sf"/>
</dbReference>
<dbReference type="InterPro" id="IPR023214">
    <property type="entry name" value="HAD_sf"/>
</dbReference>
<dbReference type="InterPro" id="IPR027256">
    <property type="entry name" value="P-typ_ATPase_IB"/>
</dbReference>
<dbReference type="InterPro" id="IPR001757">
    <property type="entry name" value="P_typ_ATPase"/>
</dbReference>
<dbReference type="NCBIfam" id="TIGR01512">
    <property type="entry name" value="ATPase-IB2_Cd"/>
    <property type="match status" value="1"/>
</dbReference>
<dbReference type="NCBIfam" id="TIGR01525">
    <property type="entry name" value="ATPase-IB_hvy"/>
    <property type="match status" value="1"/>
</dbReference>
<dbReference type="NCBIfam" id="TIGR01494">
    <property type="entry name" value="ATPase_P-type"/>
    <property type="match status" value="1"/>
</dbReference>
<dbReference type="PANTHER" id="PTHR43079:SF1">
    <property type="entry name" value="CADMIUM_ZINC-TRANSPORTING ATPASE HMA1, CHLOROPLASTIC-RELATED"/>
    <property type="match status" value="1"/>
</dbReference>
<dbReference type="PANTHER" id="PTHR43079">
    <property type="entry name" value="PROBABLE CADMIUM/ZINC-TRANSPORTING ATPASE HMA1"/>
    <property type="match status" value="1"/>
</dbReference>
<dbReference type="Pfam" id="PF00122">
    <property type="entry name" value="E1-E2_ATPase"/>
    <property type="match status" value="1"/>
</dbReference>
<dbReference type="Pfam" id="PF00702">
    <property type="entry name" value="Hydrolase"/>
    <property type="match status" value="1"/>
</dbReference>
<dbReference type="PRINTS" id="PR00119">
    <property type="entry name" value="CATATPASE"/>
</dbReference>
<dbReference type="PRINTS" id="PR00941">
    <property type="entry name" value="CDATPASE"/>
</dbReference>
<dbReference type="SUPFAM" id="SSF81653">
    <property type="entry name" value="Calcium ATPase, transduction domain A"/>
    <property type="match status" value="1"/>
</dbReference>
<dbReference type="SUPFAM" id="SSF81665">
    <property type="entry name" value="Calcium ATPase, transmembrane domain M"/>
    <property type="match status" value="1"/>
</dbReference>
<dbReference type="SUPFAM" id="SSF56784">
    <property type="entry name" value="HAD-like"/>
    <property type="match status" value="1"/>
</dbReference>
<dbReference type="PROSITE" id="PS00154">
    <property type="entry name" value="ATPASE_E1_E2"/>
    <property type="match status" value="1"/>
</dbReference>
<reference key="1">
    <citation type="journal article" date="1998" name="Nature">
        <title>Deciphering the biology of Mycobacterium tuberculosis from the complete genome sequence.</title>
        <authorList>
            <person name="Cole S.T."/>
            <person name="Brosch R."/>
            <person name="Parkhill J."/>
            <person name="Garnier T."/>
            <person name="Churcher C.M."/>
            <person name="Harris D.E."/>
            <person name="Gordon S.V."/>
            <person name="Eiglmeier K."/>
            <person name="Gas S."/>
            <person name="Barry C.E. III"/>
            <person name="Tekaia F."/>
            <person name="Badcock K."/>
            <person name="Basham D."/>
            <person name="Brown D."/>
            <person name="Chillingworth T."/>
            <person name="Connor R."/>
            <person name="Davies R.M."/>
            <person name="Devlin K."/>
            <person name="Feltwell T."/>
            <person name="Gentles S."/>
            <person name="Hamlin N."/>
            <person name="Holroyd S."/>
            <person name="Hornsby T."/>
            <person name="Jagels K."/>
            <person name="Krogh A."/>
            <person name="McLean J."/>
            <person name="Moule S."/>
            <person name="Murphy L.D."/>
            <person name="Oliver S."/>
            <person name="Osborne J."/>
            <person name="Quail M.A."/>
            <person name="Rajandream M.A."/>
            <person name="Rogers J."/>
            <person name="Rutter S."/>
            <person name="Seeger K."/>
            <person name="Skelton S."/>
            <person name="Squares S."/>
            <person name="Squares R."/>
            <person name="Sulston J.E."/>
            <person name="Taylor K."/>
            <person name="Whitehead S."/>
            <person name="Barrell B.G."/>
        </authorList>
    </citation>
    <scope>NUCLEOTIDE SEQUENCE [LARGE SCALE GENOMIC DNA]</scope>
    <source>
        <strain>ATCC 25618 / H37Rv</strain>
    </source>
</reference>
<gene>
    <name type="primary">ctpD</name>
    <name type="ordered locus">Rv1469</name>
    <name type="ORF">MTV007.16</name>
</gene>
<feature type="chain" id="PRO_0000046339" description="Probable cobalt/nickel-exporting P-type ATPase">
    <location>
        <begin position="1"/>
        <end position="657"/>
    </location>
</feature>
<feature type="transmembrane region" description="Helical" evidence="2">
    <location>
        <begin position="40"/>
        <end position="60"/>
    </location>
</feature>
<feature type="transmembrane region" description="Helical" evidence="2">
    <location>
        <begin position="62"/>
        <end position="82"/>
    </location>
</feature>
<feature type="transmembrane region" description="Helical" evidence="2">
    <location>
        <begin position="101"/>
        <end position="121"/>
    </location>
</feature>
<feature type="transmembrane region" description="Helical" evidence="2">
    <location>
        <begin position="268"/>
        <end position="288"/>
    </location>
</feature>
<feature type="transmembrane region" description="Helical" evidence="2">
    <location>
        <begin position="299"/>
        <end position="319"/>
    </location>
</feature>
<feature type="transmembrane region" description="Helical" evidence="2">
    <location>
        <begin position="596"/>
        <end position="618"/>
    </location>
</feature>
<feature type="active site" description="4-aspartylphosphate intermediate" evidence="1">
    <location>
        <position position="347"/>
    </location>
</feature>
<feature type="binding site" evidence="1">
    <location>
        <position position="543"/>
    </location>
    <ligand>
        <name>Mg(2+)</name>
        <dbReference type="ChEBI" id="CHEBI:18420"/>
    </ligand>
</feature>
<feature type="binding site" evidence="1">
    <location>
        <position position="547"/>
    </location>
    <ligand>
        <name>Mg(2+)</name>
        <dbReference type="ChEBI" id="CHEBI:18420"/>
    </ligand>
</feature>
<protein>
    <recommendedName>
        <fullName>Probable cobalt/nickel-exporting P-type ATPase</fullName>
        <ecNumber>7.2.2.-</ecNumber>
    </recommendedName>
    <alternativeName>
        <fullName>Cation-transporting P-type ATPase CtpD</fullName>
    </alternativeName>
</protein>
<organism>
    <name type="scientific">Mycobacterium tuberculosis (strain ATCC 25618 / H37Rv)</name>
    <dbReference type="NCBI Taxonomy" id="83332"/>
    <lineage>
        <taxon>Bacteria</taxon>
        <taxon>Bacillati</taxon>
        <taxon>Actinomycetota</taxon>
        <taxon>Actinomycetes</taxon>
        <taxon>Mycobacteriales</taxon>
        <taxon>Mycobacteriaceae</taxon>
        <taxon>Mycobacterium</taxon>
        <taxon>Mycobacterium tuberculosis complex</taxon>
    </lineage>
</organism>
<sequence length="657" mass="67885">MTLTACEVTAAEAPFDRVSKTIPHPLSWGAALWSVVSVRWATVALLLFLAGLVAQLNGAPEAMWWTLYLACYLAGGWGSAWAGAQALRNKALDVDLLMIAAAVGAVAIGQIFDGALLIVIFATSGALDDIATRHTAESVKGLLDLAPDQAVVVQGDGSERVVAASELVVGDRVVVRPGDRIPADGAVLSGASDVDQRSITGESMPVAKARGDEVFAGTVNGSGVLHLVVTRDPSQTVVARIVELVADASATKAKTQLFIEKIEQRYSLGMVAATLALIVIPLMFGADLRPVLLRAMTFMIVASPCAVVLATMPPLLSAIANAGRHGVLVKSAVVVERLADTSIVALDKTGTLTRGIPRLASVAPLDPNVVDARRLLQLAAAAEQSSEHPLGRAIVAEARRRGIAIPPAKDFRAVPGCGVHALVGNDFVEIASPQSYRGAPLAELAPLLSAGATAAIVLLDGVAIGVLGLTDQLRPDAVESVAAMAALTAAPPVLLTGDNGRAAWRVARNAGITDVRAALLPEQKVEVVRNLQAGGHQVLLVGDGVNDAPAMAAARAAVAMGAGADLTLQTADGVTIRDELHTIPTIIGLARQARRVVTVNLAIAATFIAVLVLWDLFGQLPLPLGVVGHEGSTVLVALNGMRLLTNRSWRAAASAAR</sequence>
<comment type="function">
    <text evidence="1">Involved in heavy metal homeostasis. Probably exports nickel and cobalt ions out of the cell (By similarity).</text>
</comment>
<comment type="subcellular location">
    <subcellularLocation>
        <location evidence="3">Cell membrane</location>
        <topology evidence="3">Multi-pass membrane protein</topology>
    </subcellularLocation>
</comment>
<comment type="similarity">
    <text evidence="3">Belongs to the cation transport ATPase (P-type) (TC 3.A.3) family. Type IB subfamily.</text>
</comment>
<evidence type="ECO:0000250" key="1"/>
<evidence type="ECO:0000255" key="2"/>
<evidence type="ECO:0000305" key="3"/>
<accession>P9WPT3</accession>
<accession>L0T9Q3</accession>
<accession>O53160</accession>
<accession>P63685</accession>
<name>CTPD_MYCTU</name>
<keyword id="KW-0067">ATP-binding</keyword>
<keyword id="KW-1003">Cell membrane</keyword>
<keyword id="KW-0170">Cobalt</keyword>
<keyword id="KW-0460">Magnesium</keyword>
<keyword id="KW-0472">Membrane</keyword>
<keyword id="KW-0479">Metal-binding</keyword>
<keyword id="KW-0533">Nickel</keyword>
<keyword id="KW-0547">Nucleotide-binding</keyword>
<keyword id="KW-0597">Phosphoprotein</keyword>
<keyword id="KW-1185">Reference proteome</keyword>
<keyword id="KW-1278">Translocase</keyword>
<keyword id="KW-0812">Transmembrane</keyword>
<keyword id="KW-1133">Transmembrane helix</keyword>
<proteinExistence type="inferred from homology"/>